<evidence type="ECO:0000255" key="1">
    <source>
        <dbReference type="HAMAP-Rule" id="MF_00444"/>
    </source>
</evidence>
<reference key="1">
    <citation type="journal article" date="2007" name="Nat. Genet.">
        <title>Genomic analysis of Bartonella identifies type IV secretion systems as host adaptability factors.</title>
        <authorList>
            <person name="Saenz H.L."/>
            <person name="Engel P."/>
            <person name="Stoeckli M.C."/>
            <person name="Lanz C."/>
            <person name="Raddatz G."/>
            <person name="Vayssier-Taussat M."/>
            <person name="Birtles R."/>
            <person name="Schuster S.C."/>
            <person name="Dehio C."/>
        </authorList>
    </citation>
    <scope>NUCLEOTIDE SEQUENCE [LARGE SCALE GENOMIC DNA]</scope>
    <source>
        <strain>CIP 105476 / IBS 506</strain>
    </source>
</reference>
<proteinExistence type="inferred from homology"/>
<gene>
    <name evidence="1" type="primary">clpP</name>
    <name type="ordered locus">BT_0876</name>
</gene>
<name>CLPP_BART1</name>
<protein>
    <recommendedName>
        <fullName evidence="1">ATP-dependent Clp protease proteolytic subunit</fullName>
        <ecNumber evidence="1">3.4.21.92</ecNumber>
    </recommendedName>
    <alternativeName>
        <fullName evidence="1">Endopeptidase Clp</fullName>
    </alternativeName>
</protein>
<organism>
    <name type="scientific">Bartonella tribocorum (strain CIP 105476 / IBS 506)</name>
    <dbReference type="NCBI Taxonomy" id="382640"/>
    <lineage>
        <taxon>Bacteria</taxon>
        <taxon>Pseudomonadati</taxon>
        <taxon>Pseudomonadota</taxon>
        <taxon>Alphaproteobacteria</taxon>
        <taxon>Hyphomicrobiales</taxon>
        <taxon>Bartonellaceae</taxon>
        <taxon>Bartonella</taxon>
    </lineage>
</organism>
<dbReference type="EC" id="3.4.21.92" evidence="1"/>
<dbReference type="EMBL" id="AM260525">
    <property type="protein sequence ID" value="CAK01280.1"/>
    <property type="molecule type" value="Genomic_DNA"/>
</dbReference>
<dbReference type="RefSeq" id="WP_012231436.1">
    <property type="nucleotide sequence ID" value="NC_010161.1"/>
</dbReference>
<dbReference type="SMR" id="A9ISA4"/>
<dbReference type="MEROPS" id="S14.001"/>
<dbReference type="KEGG" id="btr:BT_0876"/>
<dbReference type="eggNOG" id="COG0740">
    <property type="taxonomic scope" value="Bacteria"/>
</dbReference>
<dbReference type="HOGENOM" id="CLU_058707_3_2_5"/>
<dbReference type="Proteomes" id="UP000001592">
    <property type="component" value="Chromosome"/>
</dbReference>
<dbReference type="GO" id="GO:0005737">
    <property type="term" value="C:cytoplasm"/>
    <property type="evidence" value="ECO:0007669"/>
    <property type="project" value="UniProtKB-SubCell"/>
</dbReference>
<dbReference type="GO" id="GO:0009368">
    <property type="term" value="C:endopeptidase Clp complex"/>
    <property type="evidence" value="ECO:0007669"/>
    <property type="project" value="TreeGrafter"/>
</dbReference>
<dbReference type="GO" id="GO:0004176">
    <property type="term" value="F:ATP-dependent peptidase activity"/>
    <property type="evidence" value="ECO:0007669"/>
    <property type="project" value="InterPro"/>
</dbReference>
<dbReference type="GO" id="GO:0051117">
    <property type="term" value="F:ATPase binding"/>
    <property type="evidence" value="ECO:0007669"/>
    <property type="project" value="TreeGrafter"/>
</dbReference>
<dbReference type="GO" id="GO:0004252">
    <property type="term" value="F:serine-type endopeptidase activity"/>
    <property type="evidence" value="ECO:0007669"/>
    <property type="project" value="UniProtKB-UniRule"/>
</dbReference>
<dbReference type="GO" id="GO:0006515">
    <property type="term" value="P:protein quality control for misfolded or incompletely synthesized proteins"/>
    <property type="evidence" value="ECO:0007669"/>
    <property type="project" value="TreeGrafter"/>
</dbReference>
<dbReference type="CDD" id="cd07017">
    <property type="entry name" value="S14_ClpP_2"/>
    <property type="match status" value="1"/>
</dbReference>
<dbReference type="FunFam" id="3.90.226.10:FF:000001">
    <property type="entry name" value="ATP-dependent Clp protease proteolytic subunit"/>
    <property type="match status" value="1"/>
</dbReference>
<dbReference type="Gene3D" id="3.90.226.10">
    <property type="entry name" value="2-enoyl-CoA Hydratase, Chain A, domain 1"/>
    <property type="match status" value="1"/>
</dbReference>
<dbReference type="HAMAP" id="MF_00444">
    <property type="entry name" value="ClpP"/>
    <property type="match status" value="1"/>
</dbReference>
<dbReference type="InterPro" id="IPR001907">
    <property type="entry name" value="ClpP"/>
</dbReference>
<dbReference type="InterPro" id="IPR029045">
    <property type="entry name" value="ClpP/crotonase-like_dom_sf"/>
</dbReference>
<dbReference type="InterPro" id="IPR023562">
    <property type="entry name" value="ClpP/TepA"/>
</dbReference>
<dbReference type="InterPro" id="IPR033135">
    <property type="entry name" value="ClpP_His_AS"/>
</dbReference>
<dbReference type="InterPro" id="IPR018215">
    <property type="entry name" value="ClpP_Ser_AS"/>
</dbReference>
<dbReference type="NCBIfam" id="TIGR00493">
    <property type="entry name" value="clpP"/>
    <property type="match status" value="1"/>
</dbReference>
<dbReference type="NCBIfam" id="NF001368">
    <property type="entry name" value="PRK00277.1"/>
    <property type="match status" value="1"/>
</dbReference>
<dbReference type="NCBIfam" id="NF009205">
    <property type="entry name" value="PRK12553.1"/>
    <property type="match status" value="1"/>
</dbReference>
<dbReference type="PANTHER" id="PTHR10381">
    <property type="entry name" value="ATP-DEPENDENT CLP PROTEASE PROTEOLYTIC SUBUNIT"/>
    <property type="match status" value="1"/>
</dbReference>
<dbReference type="PANTHER" id="PTHR10381:SF70">
    <property type="entry name" value="ATP-DEPENDENT CLP PROTEASE PROTEOLYTIC SUBUNIT"/>
    <property type="match status" value="1"/>
</dbReference>
<dbReference type="Pfam" id="PF00574">
    <property type="entry name" value="CLP_protease"/>
    <property type="match status" value="1"/>
</dbReference>
<dbReference type="PRINTS" id="PR00127">
    <property type="entry name" value="CLPPROTEASEP"/>
</dbReference>
<dbReference type="SUPFAM" id="SSF52096">
    <property type="entry name" value="ClpP/crotonase"/>
    <property type="match status" value="1"/>
</dbReference>
<dbReference type="PROSITE" id="PS00382">
    <property type="entry name" value="CLP_PROTEASE_HIS"/>
    <property type="match status" value="1"/>
</dbReference>
<dbReference type="PROSITE" id="PS00381">
    <property type="entry name" value="CLP_PROTEASE_SER"/>
    <property type="match status" value="1"/>
</dbReference>
<feature type="chain" id="PRO_1000080881" description="ATP-dependent Clp protease proteolytic subunit">
    <location>
        <begin position="1"/>
        <end position="210"/>
    </location>
</feature>
<feature type="active site" description="Nucleophile" evidence="1">
    <location>
        <position position="106"/>
    </location>
</feature>
<feature type="active site" evidence="1">
    <location>
        <position position="131"/>
    </location>
</feature>
<accession>A9ISA4</accession>
<comment type="function">
    <text evidence="1">Cleaves peptides in various proteins in a process that requires ATP hydrolysis. Has a chymotrypsin-like activity. Plays a major role in the degradation of misfolded proteins.</text>
</comment>
<comment type="catalytic activity">
    <reaction evidence="1">
        <text>Hydrolysis of proteins to small peptides in the presence of ATP and magnesium. alpha-casein is the usual test substrate. In the absence of ATP, only oligopeptides shorter than five residues are hydrolyzed (such as succinyl-Leu-Tyr-|-NHMec, and Leu-Tyr-Leu-|-Tyr-Trp, in which cleavage of the -Tyr-|-Leu- and -Tyr-|-Trp bonds also occurs).</text>
        <dbReference type="EC" id="3.4.21.92"/>
    </reaction>
</comment>
<comment type="subunit">
    <text evidence="1">Fourteen ClpP subunits assemble into 2 heptameric rings which stack back to back to give a disk-like structure with a central cavity, resembling the structure of eukaryotic proteasomes.</text>
</comment>
<comment type="subcellular location">
    <subcellularLocation>
        <location evidence="1">Cytoplasm</location>
    </subcellularLocation>
</comment>
<comment type="similarity">
    <text evidence="1">Belongs to the peptidase S14 family.</text>
</comment>
<keyword id="KW-0963">Cytoplasm</keyword>
<keyword id="KW-0378">Hydrolase</keyword>
<keyword id="KW-0645">Protease</keyword>
<keyword id="KW-0720">Serine protease</keyword>
<sequence>MSDPMKTALSLVPMVIEQTNRGERAYDIFSRLLKERIIFINGPVEDGMAMLVCAQLLFLEAENPKKEISLYINSPGGVVTSGMAIYDTMQFIRPPVSTLCMGQAASMGSLLLTAGAKGHRFALPNARIMVHQPSGGFQGQASDIERHAQDIIKMKRRLNEIYVQHTGQGYEVIERTLDRDHFMTAEEAKAFGLVDDVIHYRAETEKEEKD</sequence>